<comment type="function">
    <text evidence="2">Displays esterase activity towards short chain fatty esters (acyl chain length of up to 8 carbons). Able to hydrolyze triacetylglycerol (triacetin) and tributyrylglycerol (tributyrin), but not trioleylglycerol (triolein) or cholesterol oleate. Negatively regulates MalT activity by antagonizing maltotriose binding. Inhibits MelA galactosidase activity.</text>
</comment>
<comment type="subunit">
    <text evidence="2">Homodimer. Interacts with MalT and MelA.</text>
</comment>
<comment type="subcellular location">
    <subcellularLocation>
        <location evidence="2">Cytoplasm</location>
    </subcellularLocation>
</comment>
<comment type="similarity">
    <text evidence="2">Belongs to the 'GDXG' lipolytic enzyme family.</text>
</comment>
<evidence type="ECO:0000250" key="1">
    <source>
        <dbReference type="UniProtKB" id="Q5NUF3"/>
    </source>
</evidence>
<evidence type="ECO:0000255" key="2">
    <source>
        <dbReference type="HAMAP-Rule" id="MF_01958"/>
    </source>
</evidence>
<name>AES_ECO7I</name>
<sequence>MKPENKLPVLDLISAEMKTVVNTLQPDLPPWPATGTIAEQRQYYTLERRFWNAGAPEMATRAYMVPTKYGQVETRLFCPQPDSPATLFYLHGGGFILGNLDTHDRIMRLLASYSQCTVIGIDYTLSPEARFPQAIEEIVAACCYFHQQAEDYQINMSRIGFAGDSAGAMLALASALWLRDKQIDCGKVAGVLLWYGLYGLRDSVTRRLLGGVWDGLTQQDLQMYEEAYLSNDADRESPYYCLFNNDLTREVPPCFIAGAEFDPLLDDSRLLYQTLAAHQQPCEFKLYPGTLHAFLHYSRMMKTADEALRDGAQFFTAQL</sequence>
<accession>B7NIF4</accession>
<protein>
    <recommendedName>
        <fullName evidence="2">Acetyl esterase</fullName>
        <ecNumber evidence="2">3.1.1.-</ecNumber>
    </recommendedName>
</protein>
<reference key="1">
    <citation type="journal article" date="2009" name="PLoS Genet.">
        <title>Organised genome dynamics in the Escherichia coli species results in highly diverse adaptive paths.</title>
        <authorList>
            <person name="Touchon M."/>
            <person name="Hoede C."/>
            <person name="Tenaillon O."/>
            <person name="Barbe V."/>
            <person name="Baeriswyl S."/>
            <person name="Bidet P."/>
            <person name="Bingen E."/>
            <person name="Bonacorsi S."/>
            <person name="Bouchier C."/>
            <person name="Bouvet O."/>
            <person name="Calteau A."/>
            <person name="Chiapello H."/>
            <person name="Clermont O."/>
            <person name="Cruveiller S."/>
            <person name="Danchin A."/>
            <person name="Diard M."/>
            <person name="Dossat C."/>
            <person name="Karoui M.E."/>
            <person name="Frapy E."/>
            <person name="Garry L."/>
            <person name="Ghigo J.M."/>
            <person name="Gilles A.M."/>
            <person name="Johnson J."/>
            <person name="Le Bouguenec C."/>
            <person name="Lescat M."/>
            <person name="Mangenot S."/>
            <person name="Martinez-Jehanne V."/>
            <person name="Matic I."/>
            <person name="Nassif X."/>
            <person name="Oztas S."/>
            <person name="Petit M.A."/>
            <person name="Pichon C."/>
            <person name="Rouy Z."/>
            <person name="Ruf C.S."/>
            <person name="Schneider D."/>
            <person name="Tourret J."/>
            <person name="Vacherie B."/>
            <person name="Vallenet D."/>
            <person name="Medigue C."/>
            <person name="Rocha E.P.C."/>
            <person name="Denamur E."/>
        </authorList>
    </citation>
    <scope>NUCLEOTIDE SEQUENCE [LARGE SCALE GENOMIC DNA]</scope>
    <source>
        <strain>IAI39 / ExPEC</strain>
    </source>
</reference>
<dbReference type="EC" id="3.1.1.-" evidence="2"/>
<dbReference type="EMBL" id="CU928164">
    <property type="protein sequence ID" value="CAR16335.1"/>
    <property type="molecule type" value="Genomic_DNA"/>
</dbReference>
<dbReference type="RefSeq" id="WP_000801813.1">
    <property type="nucleotide sequence ID" value="NC_011750.1"/>
</dbReference>
<dbReference type="RefSeq" id="YP_002406241.1">
    <property type="nucleotide sequence ID" value="NC_011750.1"/>
</dbReference>
<dbReference type="SMR" id="B7NIF4"/>
<dbReference type="STRING" id="585057.ECIAI39_0195"/>
<dbReference type="ESTHER" id="ecoli-Aes">
    <property type="family name" value="Acetyl_esterase"/>
</dbReference>
<dbReference type="MEROPS" id="S09.A47"/>
<dbReference type="KEGG" id="ect:ECIAI39_0195"/>
<dbReference type="PATRIC" id="fig|585057.6.peg.208"/>
<dbReference type="HOGENOM" id="CLU_012494_6_4_6"/>
<dbReference type="Proteomes" id="UP000000749">
    <property type="component" value="Chromosome"/>
</dbReference>
<dbReference type="GO" id="GO:0005737">
    <property type="term" value="C:cytoplasm"/>
    <property type="evidence" value="ECO:0007669"/>
    <property type="project" value="UniProtKB-SubCell"/>
</dbReference>
<dbReference type="GO" id="GO:0052689">
    <property type="term" value="F:carboxylic ester hydrolase activity"/>
    <property type="evidence" value="ECO:0007669"/>
    <property type="project" value="UniProtKB-UniRule"/>
</dbReference>
<dbReference type="FunFam" id="3.40.50.1820:FF:000035">
    <property type="entry name" value="Acetyl esterase"/>
    <property type="match status" value="1"/>
</dbReference>
<dbReference type="Gene3D" id="3.40.50.1820">
    <property type="entry name" value="alpha/beta hydrolase"/>
    <property type="match status" value="1"/>
</dbReference>
<dbReference type="HAMAP" id="MF_01958">
    <property type="entry name" value="Acetyl_esterase"/>
    <property type="match status" value="1"/>
</dbReference>
<dbReference type="InterPro" id="IPR013094">
    <property type="entry name" value="AB_hydrolase_3"/>
</dbReference>
<dbReference type="InterPro" id="IPR029058">
    <property type="entry name" value="AB_hydrolase_fold"/>
</dbReference>
<dbReference type="InterPro" id="IPR023508">
    <property type="entry name" value="Acetyl_esterase"/>
</dbReference>
<dbReference type="InterPro" id="IPR050300">
    <property type="entry name" value="GDXG_lipolytic_enzyme"/>
</dbReference>
<dbReference type="InterPro" id="IPR002168">
    <property type="entry name" value="Lipase_GDXG_HIS_AS"/>
</dbReference>
<dbReference type="InterPro" id="IPR033140">
    <property type="entry name" value="Lipase_GDXG_put_SER_AS"/>
</dbReference>
<dbReference type="NCBIfam" id="NF007547">
    <property type="entry name" value="PRK10162.1"/>
    <property type="match status" value="1"/>
</dbReference>
<dbReference type="PANTHER" id="PTHR48081">
    <property type="entry name" value="AB HYDROLASE SUPERFAMILY PROTEIN C4A8.06C"/>
    <property type="match status" value="1"/>
</dbReference>
<dbReference type="PANTHER" id="PTHR48081:SF8">
    <property type="entry name" value="ALPHA_BETA HYDROLASE FOLD-3 DOMAIN-CONTAINING PROTEIN-RELATED"/>
    <property type="match status" value="1"/>
</dbReference>
<dbReference type="Pfam" id="PF07859">
    <property type="entry name" value="Abhydrolase_3"/>
    <property type="match status" value="1"/>
</dbReference>
<dbReference type="SUPFAM" id="SSF53474">
    <property type="entry name" value="alpha/beta-Hydrolases"/>
    <property type="match status" value="1"/>
</dbReference>
<dbReference type="PROSITE" id="PS01173">
    <property type="entry name" value="LIPASE_GDXG_HIS"/>
    <property type="match status" value="1"/>
</dbReference>
<dbReference type="PROSITE" id="PS01174">
    <property type="entry name" value="LIPASE_GDXG_SER"/>
    <property type="match status" value="1"/>
</dbReference>
<gene>
    <name evidence="2" type="primary">aes</name>
    <name type="ordered locus">ECIAI39_0195</name>
</gene>
<proteinExistence type="inferred from homology"/>
<keyword id="KW-0963">Cytoplasm</keyword>
<keyword id="KW-0378">Hydrolase</keyword>
<keyword id="KW-0719">Serine esterase</keyword>
<feature type="chain" id="PRO_1000188979" description="Acetyl esterase">
    <location>
        <begin position="1"/>
        <end position="319"/>
    </location>
</feature>
<feature type="short sequence motif" description="Involved in the stabilization of the negatively charged intermediate by the formation of the oxyanion hole" evidence="1">
    <location>
        <begin position="91"/>
        <end position="93"/>
    </location>
</feature>
<feature type="active site" evidence="2">
    <location>
        <position position="165"/>
    </location>
</feature>
<feature type="active site" evidence="2">
    <location>
        <position position="262"/>
    </location>
</feature>
<feature type="active site" evidence="2">
    <location>
        <position position="292"/>
    </location>
</feature>
<organism>
    <name type="scientific">Escherichia coli O7:K1 (strain IAI39 / ExPEC)</name>
    <dbReference type="NCBI Taxonomy" id="585057"/>
    <lineage>
        <taxon>Bacteria</taxon>
        <taxon>Pseudomonadati</taxon>
        <taxon>Pseudomonadota</taxon>
        <taxon>Gammaproteobacteria</taxon>
        <taxon>Enterobacterales</taxon>
        <taxon>Enterobacteriaceae</taxon>
        <taxon>Escherichia</taxon>
    </lineage>
</organism>